<dbReference type="EMBL" id="AF498252">
    <property type="protein sequence ID" value="AAM22969.1"/>
    <property type="molecule type" value="mRNA"/>
</dbReference>
<dbReference type="EMBL" id="AF498253">
    <property type="protein sequence ID" value="AAM22970.1"/>
    <property type="molecule type" value="mRNA"/>
</dbReference>
<dbReference type="EMBL" id="AC122919">
    <property type="status" value="NOT_ANNOTATED_CDS"/>
    <property type="molecule type" value="Genomic_DNA"/>
</dbReference>
<dbReference type="EMBL" id="AC124614">
    <property type="status" value="NOT_ANNOTATED_CDS"/>
    <property type="molecule type" value="Genomic_DNA"/>
</dbReference>
<dbReference type="EMBL" id="AC125060">
    <property type="status" value="NOT_ANNOTATED_CDS"/>
    <property type="molecule type" value="Genomic_DNA"/>
</dbReference>
<dbReference type="EMBL" id="AC145076">
    <property type="status" value="NOT_ANNOTATED_CDS"/>
    <property type="molecule type" value="Genomic_DNA"/>
</dbReference>
<dbReference type="EMBL" id="AC150899">
    <property type="status" value="NOT_ANNOTATED_CDS"/>
    <property type="molecule type" value="Genomic_DNA"/>
</dbReference>
<dbReference type="CCDS" id="CCDS24096.1"/>
<dbReference type="RefSeq" id="NP_038750.2">
    <property type="nucleotide sequence ID" value="NM_013722.3"/>
</dbReference>
<dbReference type="RefSeq" id="XP_006513761.1">
    <property type="nucleotide sequence ID" value="XM_006513698.4"/>
</dbReference>
<dbReference type="RefSeq" id="XP_006513762.1">
    <property type="nucleotide sequence ID" value="XM_006513699.5"/>
</dbReference>
<dbReference type="RefSeq" id="XP_006513763.1">
    <property type="nucleotide sequence ID" value="XM_006513700.5"/>
</dbReference>
<dbReference type="SMR" id="Q8JZP2"/>
<dbReference type="BioGRID" id="205126">
    <property type="interactions" value="6"/>
</dbReference>
<dbReference type="FunCoup" id="Q8JZP2">
    <property type="interactions" value="371"/>
</dbReference>
<dbReference type="IntAct" id="Q8JZP2">
    <property type="interactions" value="3"/>
</dbReference>
<dbReference type="MINT" id="Q8JZP2"/>
<dbReference type="STRING" id="10090.ENSMUSP00000113720"/>
<dbReference type="GlyGen" id="Q8JZP2">
    <property type="glycosylation" value="1 site"/>
</dbReference>
<dbReference type="iPTMnet" id="Q8JZP2"/>
<dbReference type="PhosphoSitePlus" id="Q8JZP2"/>
<dbReference type="SwissPalm" id="Q8JZP2"/>
<dbReference type="PaxDb" id="10090-ENSMUSP00000113720"/>
<dbReference type="ProteomicsDB" id="263177"/>
<dbReference type="ABCD" id="Q8JZP2">
    <property type="antibodies" value="2 sequenced antibodies"/>
</dbReference>
<dbReference type="Antibodypedia" id="25287">
    <property type="antibodies" value="128 antibodies from 21 providers"/>
</dbReference>
<dbReference type="DNASU" id="27204"/>
<dbReference type="Ensembl" id="ENSMUST00000120638.8">
    <property type="protein sequence ID" value="ENSMUSP00000113720.2"/>
    <property type="gene ID" value="ENSMUSG00000059602.15"/>
</dbReference>
<dbReference type="GeneID" id="27204"/>
<dbReference type="KEGG" id="mmu:27204"/>
<dbReference type="UCSC" id="uc007gnn.2">
    <property type="organism name" value="mouse"/>
</dbReference>
<dbReference type="AGR" id="MGI:1351334"/>
<dbReference type="CTD" id="8224"/>
<dbReference type="MGI" id="MGI:1351334">
    <property type="gene designation" value="Syn3"/>
</dbReference>
<dbReference type="VEuPathDB" id="HostDB:ENSMUSG00000059602"/>
<dbReference type="eggNOG" id="KOG3895">
    <property type="taxonomic scope" value="Eukaryota"/>
</dbReference>
<dbReference type="GeneTree" id="ENSGT00940000155415"/>
<dbReference type="HOGENOM" id="CLU_010582_3_0_1"/>
<dbReference type="InParanoid" id="Q8JZP2"/>
<dbReference type="OMA" id="IGSAYKC"/>
<dbReference type="OrthoDB" id="10249572at2759"/>
<dbReference type="PhylomeDB" id="Q8JZP2"/>
<dbReference type="TreeFam" id="TF319919"/>
<dbReference type="Reactome" id="R-MMU-181429">
    <property type="pathway name" value="Serotonin Neurotransmitter Release Cycle"/>
</dbReference>
<dbReference type="Reactome" id="R-MMU-212676">
    <property type="pathway name" value="Dopamine Neurotransmitter Release Cycle"/>
</dbReference>
<dbReference type="BioGRID-ORCS" id="27204">
    <property type="hits" value="0 hits in 76 CRISPR screens"/>
</dbReference>
<dbReference type="CD-CODE" id="CE726F99">
    <property type="entry name" value="Postsynaptic density"/>
</dbReference>
<dbReference type="ChiTaRS" id="Syn3">
    <property type="organism name" value="mouse"/>
</dbReference>
<dbReference type="PRO" id="PR:Q8JZP2"/>
<dbReference type="Proteomes" id="UP000000589">
    <property type="component" value="Chromosome 10"/>
</dbReference>
<dbReference type="RNAct" id="Q8JZP2">
    <property type="molecule type" value="protein"/>
</dbReference>
<dbReference type="Bgee" id="ENSMUSG00000059602">
    <property type="expression patterns" value="Expressed in embryonic brain and 55 other cell types or tissues"/>
</dbReference>
<dbReference type="ExpressionAtlas" id="Q8JZP2">
    <property type="expression patterns" value="baseline and differential"/>
</dbReference>
<dbReference type="GO" id="GO:0098850">
    <property type="term" value="C:extrinsic component of synaptic vesicle membrane"/>
    <property type="evidence" value="ECO:0007669"/>
    <property type="project" value="Ensembl"/>
</dbReference>
<dbReference type="GO" id="GO:0098978">
    <property type="term" value="C:glutamatergic synapse"/>
    <property type="evidence" value="ECO:0000314"/>
    <property type="project" value="SynGO"/>
</dbReference>
<dbReference type="GO" id="GO:0014069">
    <property type="term" value="C:postsynaptic density"/>
    <property type="evidence" value="ECO:0000314"/>
    <property type="project" value="MGI"/>
</dbReference>
<dbReference type="GO" id="GO:0045202">
    <property type="term" value="C:synapse"/>
    <property type="evidence" value="ECO:0000314"/>
    <property type="project" value="MGI"/>
</dbReference>
<dbReference type="GO" id="GO:0030672">
    <property type="term" value="C:synaptic vesicle membrane"/>
    <property type="evidence" value="ECO:0000314"/>
    <property type="project" value="MGI"/>
</dbReference>
<dbReference type="GO" id="GO:0005524">
    <property type="term" value="F:ATP binding"/>
    <property type="evidence" value="ECO:0007669"/>
    <property type="project" value="UniProtKB-KW"/>
</dbReference>
<dbReference type="GO" id="GO:0007269">
    <property type="term" value="P:neurotransmitter secretion"/>
    <property type="evidence" value="ECO:0007669"/>
    <property type="project" value="InterPro"/>
</dbReference>
<dbReference type="GO" id="GO:0097091">
    <property type="term" value="P:synaptic vesicle clustering"/>
    <property type="evidence" value="ECO:0000314"/>
    <property type="project" value="SynGO"/>
</dbReference>
<dbReference type="GO" id="GO:0099504">
    <property type="term" value="P:synaptic vesicle cycle"/>
    <property type="evidence" value="ECO:0000314"/>
    <property type="project" value="SynGO"/>
</dbReference>
<dbReference type="FunFam" id="3.30.1490.20:FF:000008">
    <property type="entry name" value="Synapsin I"/>
    <property type="match status" value="1"/>
</dbReference>
<dbReference type="FunFam" id="3.30.470.20:FF:000042">
    <property type="entry name" value="Synapsin III"/>
    <property type="match status" value="1"/>
</dbReference>
<dbReference type="FunFam" id="3.40.50.20:FF:000008">
    <property type="entry name" value="Synapsin III"/>
    <property type="match status" value="1"/>
</dbReference>
<dbReference type="Gene3D" id="3.40.50.20">
    <property type="match status" value="1"/>
</dbReference>
<dbReference type="Gene3D" id="3.30.1490.20">
    <property type="entry name" value="ATP-grasp fold, A domain"/>
    <property type="match status" value="1"/>
</dbReference>
<dbReference type="Gene3D" id="3.30.470.20">
    <property type="entry name" value="ATP-grasp fold, B domain"/>
    <property type="match status" value="1"/>
</dbReference>
<dbReference type="InterPro" id="IPR013815">
    <property type="entry name" value="ATP_grasp_subdomain_1"/>
</dbReference>
<dbReference type="InterPro" id="IPR016185">
    <property type="entry name" value="PreATP-grasp_dom_sf"/>
</dbReference>
<dbReference type="InterPro" id="IPR001359">
    <property type="entry name" value="Synapsin"/>
</dbReference>
<dbReference type="InterPro" id="IPR020898">
    <property type="entry name" value="Synapsin_ATP-bd_dom"/>
</dbReference>
<dbReference type="InterPro" id="IPR019735">
    <property type="entry name" value="Synapsin_CS"/>
</dbReference>
<dbReference type="InterPro" id="IPR019736">
    <property type="entry name" value="Synapsin_P_site"/>
</dbReference>
<dbReference type="InterPro" id="IPR020897">
    <property type="entry name" value="Synapsin_pre-ATP-grasp_dom"/>
</dbReference>
<dbReference type="PANTHER" id="PTHR10841">
    <property type="entry name" value="SYNAPSIN"/>
    <property type="match status" value="1"/>
</dbReference>
<dbReference type="PANTHER" id="PTHR10841:SF27">
    <property type="entry name" value="SYNAPSIN-3"/>
    <property type="match status" value="1"/>
</dbReference>
<dbReference type="Pfam" id="PF02078">
    <property type="entry name" value="Synapsin"/>
    <property type="match status" value="1"/>
</dbReference>
<dbReference type="Pfam" id="PF02750">
    <property type="entry name" value="Synapsin_C"/>
    <property type="match status" value="1"/>
</dbReference>
<dbReference type="Pfam" id="PF10581">
    <property type="entry name" value="Synapsin_N"/>
    <property type="match status" value="1"/>
</dbReference>
<dbReference type="PRINTS" id="PR01368">
    <property type="entry name" value="SYNAPSIN"/>
</dbReference>
<dbReference type="SUPFAM" id="SSF56059">
    <property type="entry name" value="Glutathione synthetase ATP-binding domain-like"/>
    <property type="match status" value="1"/>
</dbReference>
<dbReference type="SUPFAM" id="SSF52440">
    <property type="entry name" value="PreATP-grasp domain"/>
    <property type="match status" value="1"/>
</dbReference>
<dbReference type="PROSITE" id="PS00415">
    <property type="entry name" value="SYNAPSIN_1"/>
    <property type="match status" value="1"/>
</dbReference>
<dbReference type="PROSITE" id="PS00416">
    <property type="entry name" value="SYNAPSIN_2"/>
    <property type="match status" value="1"/>
</dbReference>
<proteinExistence type="evidence at protein level"/>
<sequence>MNFLRRRLSDSSFVANLPNGYMPDLQRPESSSSSPASPATERRHPQPLAASFSSPGSSLFSSFSGAMKQTPQAPSGLMEPPTPVTPVVQRPRILLVIDDAHTDWSKYFHGKKVNGDIEIRVEQAEFSELNLAAYVTGGCMVDMQVVRNGTKIVRSFKPDFILVRQHAYSMALAEDYRSLVIGLQYGGLPAVNSLYSVYNFCSKPWVFSQLIKIFHSLGPEKFPLVEQTFFPNHKPMLTAPNFPVVIKLGHAHAGMGKIKVENQHDYQDITSVVAMAKTYATTEAFIDSKYDIRIQKIGSNYKAYMRTSISGNWKANTGSAMLEQVAMTERYRLWVDSCSEMFGGLDICAVKAVHSKDGRDYIIEVMDSSMPLIGEHVEEDKQLMADLVVSKMSQLLVPGATVPSPLRPWGPQTKPAKSPGQGQLGPLLGQPQPRPPPQGGPRQAQSPQPPRSRSPSQQRLSPQGQQPVSPQSGSPQQQRSPGSPQLSRASGGSSPNQASKPSASLSSHNRPPVQGRSTSQQGEEPQKSASPHPHLNKSQSLTNSLSTSDTSHRGTPSEDEAKAETIRNLRKSFASLFSD</sequence>
<keyword id="KW-0067">ATP-binding</keyword>
<keyword id="KW-0106">Calcium</keyword>
<keyword id="KW-0968">Cytoplasmic vesicle</keyword>
<keyword id="KW-0472">Membrane</keyword>
<keyword id="KW-0547">Nucleotide-binding</keyword>
<keyword id="KW-0597">Phosphoprotein</keyword>
<keyword id="KW-1185">Reference proteome</keyword>
<keyword id="KW-0770">Synapse</keyword>
<organism>
    <name type="scientific">Mus musculus</name>
    <name type="common">Mouse</name>
    <dbReference type="NCBI Taxonomy" id="10090"/>
    <lineage>
        <taxon>Eukaryota</taxon>
        <taxon>Metazoa</taxon>
        <taxon>Chordata</taxon>
        <taxon>Craniata</taxon>
        <taxon>Vertebrata</taxon>
        <taxon>Euteleostomi</taxon>
        <taxon>Mammalia</taxon>
        <taxon>Eutheria</taxon>
        <taxon>Euarchontoglires</taxon>
        <taxon>Glires</taxon>
        <taxon>Rodentia</taxon>
        <taxon>Myomorpha</taxon>
        <taxon>Muroidea</taxon>
        <taxon>Muridae</taxon>
        <taxon>Murinae</taxon>
        <taxon>Mus</taxon>
        <taxon>Mus</taxon>
    </lineage>
</organism>
<feature type="chain" id="PRO_0000183025" description="Synapsin-3">
    <location>
        <begin position="1"/>
        <end position="579"/>
    </location>
</feature>
<feature type="region of interest" description="A">
    <location>
        <begin position="1"/>
        <end position="28"/>
    </location>
</feature>
<feature type="region of interest" description="Disordered" evidence="3">
    <location>
        <begin position="15"/>
        <end position="83"/>
    </location>
</feature>
<feature type="region of interest" description="B; linker">
    <location>
        <begin position="28"/>
        <end position="90"/>
    </location>
</feature>
<feature type="region of interest" description="C; actin-binding and synaptic-vesicle binding">
    <location>
        <begin position="91"/>
        <end position="398"/>
    </location>
</feature>
<feature type="region of interest" description="J; Pro-rich linker">
    <location>
        <begin position="399"/>
        <end position="530"/>
    </location>
</feature>
<feature type="region of interest" description="Disordered" evidence="3">
    <location>
        <begin position="401"/>
        <end position="566"/>
    </location>
</feature>
<feature type="region of interest" description="E">
    <location>
        <begin position="531"/>
        <end position="579"/>
    </location>
</feature>
<feature type="compositionally biased region" description="Low complexity" evidence="3">
    <location>
        <begin position="30"/>
        <end position="39"/>
    </location>
</feature>
<feature type="compositionally biased region" description="Low complexity" evidence="3">
    <location>
        <begin position="47"/>
        <end position="66"/>
    </location>
</feature>
<feature type="compositionally biased region" description="Low complexity" evidence="3">
    <location>
        <begin position="418"/>
        <end position="431"/>
    </location>
</feature>
<feature type="compositionally biased region" description="Low complexity" evidence="3">
    <location>
        <begin position="453"/>
        <end position="485"/>
    </location>
</feature>
<feature type="compositionally biased region" description="Polar residues" evidence="3">
    <location>
        <begin position="486"/>
        <end position="529"/>
    </location>
</feature>
<feature type="compositionally biased region" description="Low complexity" evidence="3">
    <location>
        <begin position="536"/>
        <end position="549"/>
    </location>
</feature>
<feature type="compositionally biased region" description="Basic and acidic residues" evidence="3">
    <location>
        <begin position="550"/>
        <end position="566"/>
    </location>
</feature>
<feature type="modified residue" description="Phosphoserine" evidence="6">
    <location>
        <position position="9"/>
    </location>
</feature>
<feature type="modified residue" description="Phosphoserine" evidence="6">
    <location>
        <position position="454"/>
    </location>
</feature>
<feature type="modified residue" description="Phosphoserine" evidence="6">
    <location>
        <position position="461"/>
    </location>
</feature>
<feature type="modified residue" description="Phosphoserine" evidence="6">
    <location>
        <position position="469"/>
    </location>
</feature>
<feature type="modified residue" description="Phosphoserine" evidence="6">
    <location>
        <position position="474"/>
    </location>
</feature>
<feature type="modified residue" description="Phosphoserine" evidence="2">
    <location>
        <position position="480"/>
    </location>
</feature>
<feature type="modified residue" description="Phosphoserine" evidence="5">
    <location>
        <position position="483"/>
    </location>
</feature>
<feature type="modified residue" description="Phosphoserine" evidence="6">
    <location>
        <position position="540"/>
    </location>
</feature>
<feature type="sequence conflict" description="In Ref. 1; AAM22969/AAM22970." evidence="4" ref="1">
    <original>G</original>
    <variation>S</variation>
    <location>
        <position position="65"/>
    </location>
</feature>
<gene>
    <name type="primary">Syn3</name>
</gene>
<accession>Q8JZP2</accession>
<accession>E9QNQ6</accession>
<reference key="1">
    <citation type="journal article" date="2001" name="Mamm. Genome">
        <title>High-throughput sequence identification of gene coding variants within alcohol-related QTLs.</title>
        <authorList>
            <person name="Ehringer M.A."/>
            <person name="Thompson J."/>
            <person name="Conroy O."/>
            <person name="Xu Y."/>
            <person name="Yang F."/>
            <person name="Canniff J."/>
            <person name="Beeson M."/>
            <person name="Gordon L."/>
            <person name="Bennett B."/>
            <person name="Johnson T.E."/>
            <person name="Sikela J.M."/>
        </authorList>
    </citation>
    <scope>NUCLEOTIDE SEQUENCE [MRNA]</scope>
    <source>
        <strain>ILS</strain>
        <strain>ISS</strain>
    </source>
</reference>
<reference key="2">
    <citation type="journal article" date="2009" name="PLoS Biol.">
        <title>Lineage-specific biology revealed by a finished genome assembly of the mouse.</title>
        <authorList>
            <person name="Church D.M."/>
            <person name="Goodstadt L."/>
            <person name="Hillier L.W."/>
            <person name="Zody M.C."/>
            <person name="Goldstein S."/>
            <person name="She X."/>
            <person name="Bult C.J."/>
            <person name="Agarwala R."/>
            <person name="Cherry J.L."/>
            <person name="DiCuccio M."/>
            <person name="Hlavina W."/>
            <person name="Kapustin Y."/>
            <person name="Meric P."/>
            <person name="Maglott D."/>
            <person name="Birtle Z."/>
            <person name="Marques A.C."/>
            <person name="Graves T."/>
            <person name="Zhou S."/>
            <person name="Teague B."/>
            <person name="Potamousis K."/>
            <person name="Churas C."/>
            <person name="Place M."/>
            <person name="Herschleb J."/>
            <person name="Runnheim R."/>
            <person name="Forrest D."/>
            <person name="Amos-Landgraf J."/>
            <person name="Schwartz D.C."/>
            <person name="Cheng Z."/>
            <person name="Lindblad-Toh K."/>
            <person name="Eichler E.E."/>
            <person name="Ponting C.P."/>
        </authorList>
    </citation>
    <scope>NUCLEOTIDE SEQUENCE [LARGE SCALE GENOMIC DNA]</scope>
    <source>
        <strain>C57BL/6J</strain>
    </source>
</reference>
<reference key="3">
    <citation type="journal article" date="2006" name="Mol. Cell. Proteomics">
        <title>Comprehensive identification of phosphorylation sites in postsynaptic density preparations.</title>
        <authorList>
            <person name="Trinidad J.C."/>
            <person name="Specht C.G."/>
            <person name="Thalhammer A."/>
            <person name="Schoepfer R."/>
            <person name="Burlingame A.L."/>
        </authorList>
    </citation>
    <scope>PHOSPHORYLATION [LARGE SCALE ANALYSIS] AT SER-483</scope>
    <scope>IDENTIFICATION BY MASS SPECTROMETRY [LARGE SCALE ANALYSIS]</scope>
    <source>
        <tissue>Brain</tissue>
    </source>
</reference>
<reference key="4">
    <citation type="journal article" date="2007" name="Mol. Cell. Proteomics">
        <title>Qualitative and quantitative analyses of protein phosphorylation in naive and stimulated mouse synaptosomal preparations.</title>
        <authorList>
            <person name="Munton R.P."/>
            <person name="Tweedie-Cullen R."/>
            <person name="Livingstone-Zatchej M."/>
            <person name="Weinandy F."/>
            <person name="Waidelich M."/>
            <person name="Longo D."/>
            <person name="Gehrig P."/>
            <person name="Potthast F."/>
            <person name="Rutishauser D."/>
            <person name="Gerrits B."/>
            <person name="Panse C."/>
            <person name="Schlapbach R."/>
            <person name="Mansuy I.M."/>
        </authorList>
    </citation>
    <scope>IDENTIFICATION BY MASS SPECTROMETRY [LARGE SCALE ANALYSIS]</scope>
    <source>
        <tissue>Brain cortex</tissue>
    </source>
</reference>
<reference key="5">
    <citation type="journal article" date="2010" name="Cell">
        <title>A tissue-specific atlas of mouse protein phosphorylation and expression.</title>
        <authorList>
            <person name="Huttlin E.L."/>
            <person name="Jedrychowski M.P."/>
            <person name="Elias J.E."/>
            <person name="Goswami T."/>
            <person name="Rad R."/>
            <person name="Beausoleil S.A."/>
            <person name="Villen J."/>
            <person name="Haas W."/>
            <person name="Sowa M.E."/>
            <person name="Gygi S.P."/>
        </authorList>
    </citation>
    <scope>PHOSPHORYLATION [LARGE SCALE ANALYSIS] AT SER-9; SER-454; SER-461; SER-469; SER-474 AND SER-540</scope>
    <scope>IDENTIFICATION BY MASS SPECTROMETRY [LARGE SCALE ANALYSIS]</scope>
    <source>
        <tissue>Brain</tissue>
    </source>
</reference>
<name>SYN3_MOUSE</name>
<evidence type="ECO:0000250" key="1"/>
<evidence type="ECO:0000250" key="2">
    <source>
        <dbReference type="UniProtKB" id="O70441"/>
    </source>
</evidence>
<evidence type="ECO:0000256" key="3">
    <source>
        <dbReference type="SAM" id="MobiDB-lite"/>
    </source>
</evidence>
<evidence type="ECO:0000305" key="4"/>
<evidence type="ECO:0007744" key="5">
    <source>
    </source>
</evidence>
<evidence type="ECO:0007744" key="6">
    <source>
    </source>
</evidence>
<protein>
    <recommendedName>
        <fullName>Synapsin-3</fullName>
    </recommendedName>
    <alternativeName>
        <fullName>Synapsin III</fullName>
    </alternativeName>
</protein>
<comment type="function">
    <text evidence="1">May be involved in the regulation of neurotransmitter release and synaptogenesis. Binds ATP with high affinity and ADP with a lower affinity. This is consistent with a catalytic role of the C-domain in which ADP would be dissociated by cellular ATP after bound ATP was hydrolyzed (By similarity).</text>
</comment>
<comment type="subunit">
    <text evidence="1">Interacts with CAPON.</text>
</comment>
<comment type="subcellular location">
    <subcellularLocation>
        <location evidence="1">Cytoplasmic vesicle</location>
        <location evidence="1">Secretory vesicle</location>
        <location evidence="1">Synaptic vesicle membrane</location>
        <topology evidence="1">Peripheral membrane protein</topology>
        <orientation evidence="1">Cytoplasmic side</orientation>
    </subcellularLocation>
    <text evidence="1">Peripheral membrane protein localized to the cytoplasmic surface of synaptic vesicles.</text>
</comment>
<comment type="domain">
    <text evidence="1">The A region binds phospholipids with a preference for negatively charged species.</text>
</comment>
<comment type="PTM">
    <text evidence="1">Phosphorylation at Ser-9 dissociates synapsins from synaptic vesicles.</text>
</comment>
<comment type="miscellaneous">
    <text evidence="1">Regulated by calcium. Calcium inhibits ATP binding to the C-domain (By similarity).</text>
</comment>
<comment type="similarity">
    <text evidence="4">Belongs to the synapsin family.</text>
</comment>